<reference key="1">
    <citation type="journal article" date="2003" name="Regul. Pept.">
        <title>Production of recombinant human relaxin 3 in AtT20 cells.</title>
        <authorList>
            <person name="Kizawa H."/>
            <person name="Nishi K."/>
            <person name="Ishibashi Y."/>
            <person name="Harada M."/>
            <person name="Asano T."/>
            <person name="Ito Y."/>
            <person name="Suzuki N."/>
            <person name="Hinuma S."/>
            <person name="Fujisawa Y."/>
            <person name="Onda H."/>
            <person name="Nishimura O."/>
            <person name="Fujino M."/>
        </authorList>
    </citation>
    <scope>NUCLEOTIDE SEQUENCE [MRNA]</scope>
</reference>
<reference key="2">
    <citation type="journal article" date="2002" name="J. Biol. Chem.">
        <title>Human relaxin gene 3 (H3) and the equivalent mouse relaxin (M3) gene. Novel members of the relaxin peptide family.</title>
        <authorList>
            <person name="Bathgate R.A.D."/>
            <person name="Samuel C.S."/>
            <person name="Burazin T.C.D."/>
            <person name="Layfield S."/>
            <person name="Claasz A.A."/>
            <person name="Reytomas I.G.T."/>
            <person name="Dawson N.F."/>
            <person name="Zhao C."/>
            <person name="Bond C."/>
            <person name="Summers R.J."/>
            <person name="Parry L.J."/>
            <person name="Wade J.D."/>
            <person name="Tregear G.W."/>
        </authorList>
    </citation>
    <scope>TISSUE SPECIFICITY</scope>
</reference>
<feature type="signal peptide" evidence="1">
    <location>
        <begin position="1"/>
        <end position="24"/>
    </location>
</feature>
<feature type="peptide" id="PRO_0000016085" description="Relaxin-3 B chain" evidence="1">
    <location>
        <begin position="25"/>
        <end position="51"/>
    </location>
</feature>
<feature type="propeptide" id="PRO_0000016086" description="Connecting peptide" evidence="1">
    <location>
        <begin position="54"/>
        <end position="117"/>
    </location>
</feature>
<feature type="peptide" id="PRO_0000016087" description="Relaxin-3 A chain" evidence="1">
    <location>
        <begin position="118"/>
        <end position="141"/>
    </location>
</feature>
<feature type="disulfide bond" description="Interchain (between B and A chains)" evidence="1">
    <location>
        <begin position="34"/>
        <end position="128"/>
    </location>
</feature>
<feature type="disulfide bond" description="Interchain (between B and A chains)" evidence="1">
    <location>
        <begin position="46"/>
        <end position="141"/>
    </location>
</feature>
<feature type="disulfide bond" evidence="1">
    <location>
        <begin position="127"/>
        <end position="132"/>
    </location>
</feature>
<keyword id="KW-0165">Cleavage on pair of basic residues</keyword>
<keyword id="KW-1015">Disulfide bond</keyword>
<keyword id="KW-0372">Hormone</keyword>
<keyword id="KW-1185">Reference proteome</keyword>
<keyword id="KW-0964">Secreted</keyword>
<keyword id="KW-0732">Signal</keyword>
<gene>
    <name type="primary">Rln3</name>
    <name type="synonym">Insl7</name>
</gene>
<accession>Q8CHK2</accession>
<organism>
    <name type="scientific">Mus musculus</name>
    <name type="common">Mouse</name>
    <dbReference type="NCBI Taxonomy" id="10090"/>
    <lineage>
        <taxon>Eukaryota</taxon>
        <taxon>Metazoa</taxon>
        <taxon>Chordata</taxon>
        <taxon>Craniata</taxon>
        <taxon>Vertebrata</taxon>
        <taxon>Euteleostomi</taxon>
        <taxon>Mammalia</taxon>
        <taxon>Eutheria</taxon>
        <taxon>Euarchontoglires</taxon>
        <taxon>Glires</taxon>
        <taxon>Rodentia</taxon>
        <taxon>Myomorpha</taxon>
        <taxon>Muroidea</taxon>
        <taxon>Muridae</taxon>
        <taxon>Murinae</taxon>
        <taxon>Mus</taxon>
        <taxon>Mus</taxon>
    </lineage>
</organism>
<proteinExistence type="evidence at transcript level"/>
<sequence length="141" mass="14926">MAMLGLLLLASWALLGALGLQAEARPAPYGVKLCGREFIRAVIFTCGGSRWRRADILAHESLGDFFADGEANTDHLASELDEAVGSSEWLALTKSPQAFYGGRASWQGSPGVVRGSRDVLAGLSSSCCEWGCSKSQISSLC</sequence>
<dbReference type="EMBL" id="AB076565">
    <property type="protein sequence ID" value="BAC53760.1"/>
    <property type="molecule type" value="mRNA"/>
</dbReference>
<dbReference type="CCDS" id="CCDS22466.1"/>
<dbReference type="RefSeq" id="NP_775276.1">
    <property type="nucleotide sequence ID" value="NM_173184.1"/>
</dbReference>
<dbReference type="FunCoup" id="Q8CHK2">
    <property type="interactions" value="739"/>
</dbReference>
<dbReference type="STRING" id="10090.ENSMUSP00000051392"/>
<dbReference type="PhosphoSitePlus" id="Q8CHK2"/>
<dbReference type="PaxDb" id="10090-ENSMUSP00000051392"/>
<dbReference type="ProteomicsDB" id="255179"/>
<dbReference type="Antibodypedia" id="50312">
    <property type="antibodies" value="145 antibodies from 24 providers"/>
</dbReference>
<dbReference type="DNASU" id="212108"/>
<dbReference type="Ensembl" id="ENSMUST00000061923.5">
    <property type="protein sequence ID" value="ENSMUSP00000051392.4"/>
    <property type="gene ID" value="ENSMUSG00000045232.5"/>
</dbReference>
<dbReference type="GeneID" id="212108"/>
<dbReference type="KEGG" id="mmu:212108"/>
<dbReference type="UCSC" id="uc009mls.1">
    <property type="organism name" value="mouse"/>
</dbReference>
<dbReference type="AGR" id="MGI:2158015"/>
<dbReference type="CTD" id="117579"/>
<dbReference type="MGI" id="MGI:2158015">
    <property type="gene designation" value="Rln3"/>
</dbReference>
<dbReference type="VEuPathDB" id="HostDB:ENSMUSG00000045232"/>
<dbReference type="eggNOG" id="ENOG502S2C4">
    <property type="taxonomic scope" value="Eukaryota"/>
</dbReference>
<dbReference type="GeneTree" id="ENSGT00940000154396"/>
<dbReference type="HOGENOM" id="CLU_120043_0_0_1"/>
<dbReference type="InParanoid" id="Q8CHK2"/>
<dbReference type="OMA" id="WGCSKRE"/>
<dbReference type="OrthoDB" id="9443437at2759"/>
<dbReference type="PhylomeDB" id="Q8CHK2"/>
<dbReference type="TreeFam" id="TF333404"/>
<dbReference type="Reactome" id="R-MMU-418555">
    <property type="pathway name" value="G alpha (s) signalling events"/>
</dbReference>
<dbReference type="Reactome" id="R-MMU-418594">
    <property type="pathway name" value="G alpha (i) signalling events"/>
</dbReference>
<dbReference type="Reactome" id="R-MMU-444821">
    <property type="pathway name" value="Relaxin receptors"/>
</dbReference>
<dbReference type="BioGRID-ORCS" id="212108">
    <property type="hits" value="2 hits in 77 CRISPR screens"/>
</dbReference>
<dbReference type="ChiTaRS" id="Rln3">
    <property type="organism name" value="mouse"/>
</dbReference>
<dbReference type="PRO" id="PR:Q8CHK2"/>
<dbReference type="Proteomes" id="UP000000589">
    <property type="component" value="Chromosome 8"/>
</dbReference>
<dbReference type="RNAct" id="Q8CHK2">
    <property type="molecule type" value="protein"/>
</dbReference>
<dbReference type="Bgee" id="ENSMUSG00000045232">
    <property type="expression patterns" value="Expressed in secondary oocyte and 26 other cell types or tissues"/>
</dbReference>
<dbReference type="GO" id="GO:0005576">
    <property type="term" value="C:extracellular region"/>
    <property type="evidence" value="ECO:0000304"/>
    <property type="project" value="MGI"/>
</dbReference>
<dbReference type="GO" id="GO:0001664">
    <property type="term" value="F:G protein-coupled receptor binding"/>
    <property type="evidence" value="ECO:0007669"/>
    <property type="project" value="Ensembl"/>
</dbReference>
<dbReference type="GO" id="GO:0005179">
    <property type="term" value="F:hormone activity"/>
    <property type="evidence" value="ECO:0007669"/>
    <property type="project" value="UniProtKB-KW"/>
</dbReference>
<dbReference type="CDD" id="cd04365">
    <property type="entry name" value="IlGF_relaxin_like"/>
    <property type="match status" value="1"/>
</dbReference>
<dbReference type="InterPro" id="IPR016179">
    <property type="entry name" value="Insulin-like"/>
</dbReference>
<dbReference type="InterPro" id="IPR051777">
    <property type="entry name" value="Insulin-like_neuro_ligands"/>
</dbReference>
<dbReference type="InterPro" id="IPR036438">
    <property type="entry name" value="Insulin-like_sf"/>
</dbReference>
<dbReference type="InterPro" id="IPR022353">
    <property type="entry name" value="Insulin_CS"/>
</dbReference>
<dbReference type="InterPro" id="IPR022352">
    <property type="entry name" value="Insulin_family"/>
</dbReference>
<dbReference type="PANTHER" id="PTHR20968">
    <property type="entry name" value="ILGF DOMAIN-CONTAINING PROTEIN"/>
    <property type="match status" value="1"/>
</dbReference>
<dbReference type="PANTHER" id="PTHR20968:SF0">
    <property type="entry name" value="RELAXIN-3"/>
    <property type="match status" value="1"/>
</dbReference>
<dbReference type="Pfam" id="PF00049">
    <property type="entry name" value="Insulin"/>
    <property type="match status" value="1"/>
</dbReference>
<dbReference type="PRINTS" id="PR00276">
    <property type="entry name" value="INSULINFAMLY"/>
</dbReference>
<dbReference type="SMART" id="SM00078">
    <property type="entry name" value="IlGF"/>
    <property type="match status" value="1"/>
</dbReference>
<dbReference type="SUPFAM" id="SSF56994">
    <property type="entry name" value="Insulin-like"/>
    <property type="match status" value="1"/>
</dbReference>
<dbReference type="PROSITE" id="PS00262">
    <property type="entry name" value="INSULIN"/>
    <property type="match status" value="1"/>
</dbReference>
<name>REL3_MOUSE</name>
<protein>
    <recommendedName>
        <fullName>Relaxin-3</fullName>
    </recommendedName>
    <alternativeName>
        <fullName>Insulin-like peptide INSL7</fullName>
        <shortName>Insulin-like peptide 7</shortName>
    </alternativeName>
    <alternativeName>
        <fullName>Prorelaxin M3</fullName>
    </alternativeName>
    <component>
        <recommendedName>
            <fullName>Relaxin-3 B chain</fullName>
        </recommendedName>
    </component>
    <component>
        <recommendedName>
            <fullName>Relaxin-3 A chain</fullName>
        </recommendedName>
    </component>
</protein>
<comment type="function">
    <text evidence="1">May play a role in neuropeptide signaling processes. Ligand for LGR7, relaxin-3 receptor-1 and relaxin-3 receptor-2 (By similarity).</text>
</comment>
<comment type="subunit">
    <text>Heterodimer of a B chain and an A chain linked by two disulfide bonds.</text>
</comment>
<comment type="subcellular location">
    <subcellularLocation>
        <location>Secreted</location>
    </subcellularLocation>
</comment>
<comment type="tissue specificity">
    <text evidence="2">High expression in the brain localized to the pons/medulla with highest levels in pars ventromedialis of the dorsal tegmental nucleus. Significant expression is also detected in the spleen, thymus, lung, testis and ovary.</text>
</comment>
<comment type="similarity">
    <text evidence="3">Belongs to the insulin family.</text>
</comment>
<evidence type="ECO:0000250" key="1"/>
<evidence type="ECO:0000269" key="2">
    <source>
    </source>
</evidence>
<evidence type="ECO:0000305" key="3"/>